<accession>Q67IE0</accession>
<name>RR7_SISMO</name>
<comment type="function">
    <text evidence="1">One of the primary rRNA binding proteins, it binds directly to 16S rRNA where it nucleates assembly of the head domain of the 30S subunit.</text>
</comment>
<comment type="subunit">
    <text>Part of the 30S ribosomal subunit.</text>
</comment>
<comment type="subcellular location">
    <subcellularLocation>
        <location>Plastid</location>
        <location>Chloroplast</location>
    </subcellularLocation>
</comment>
<comment type="similarity">
    <text evidence="2">Belongs to the universal ribosomal protein uS7 family.</text>
</comment>
<sequence>MSRRGTAEEKTAKSDPIYRNRLVNMLVNRILKHGKKSLAYQIIYRAVKKIQQKTETNPLSVLRQAIRGVTPDIAVKARRVGGSTHQVPIEIGSTQGKALAIRWLLGASRKRPGRNMAFKLSSELVDAAKGSGDAIRKKEETHRMAEANRAFAHFR</sequence>
<evidence type="ECO:0000250" key="1"/>
<evidence type="ECO:0000305" key="2"/>
<reference key="1">
    <citation type="submission" date="2002-09" db="EMBL/GenBank/DDBJ databases">
        <title>Phylogenetic relationships among the major lineages of Asparagales based on a large chloroplast data set.</title>
        <authorList>
            <person name="McPherson M.A."/>
            <person name="Rai H.S."/>
            <person name="Wong W.A."/>
            <person name="Graham S.W."/>
        </authorList>
    </citation>
    <scope>NUCLEOTIDE SEQUENCE [GENOMIC DNA]</scope>
</reference>
<organism>
    <name type="scientific">Sisyrinchium montanum</name>
    <name type="common">Strict blue-eyed grass</name>
    <dbReference type="NCBI Taxonomy" id="207934"/>
    <lineage>
        <taxon>Eukaryota</taxon>
        <taxon>Viridiplantae</taxon>
        <taxon>Streptophyta</taxon>
        <taxon>Embryophyta</taxon>
        <taxon>Tracheophyta</taxon>
        <taxon>Spermatophyta</taxon>
        <taxon>Magnoliopsida</taxon>
        <taxon>Liliopsida</taxon>
        <taxon>Asparagales</taxon>
        <taxon>Iridaceae</taxon>
        <taxon>Iridoideae</taxon>
        <taxon>Sisyrinchieae</taxon>
        <taxon>Sisyrinchium</taxon>
    </lineage>
</organism>
<keyword id="KW-0150">Chloroplast</keyword>
<keyword id="KW-0934">Plastid</keyword>
<keyword id="KW-0687">Ribonucleoprotein</keyword>
<keyword id="KW-0689">Ribosomal protein</keyword>
<keyword id="KW-0694">RNA-binding</keyword>
<keyword id="KW-0699">rRNA-binding</keyword>
<gene>
    <name type="primary">rps7</name>
</gene>
<geneLocation type="chloroplast"/>
<protein>
    <recommendedName>
        <fullName evidence="2">Small ribosomal subunit protein uS7c</fullName>
    </recommendedName>
    <alternativeName>
        <fullName>30S ribosomal protein S7, chloroplastic</fullName>
    </alternativeName>
</protein>
<proteinExistence type="inferred from homology"/>
<feature type="chain" id="PRO_0000124504" description="Small ribosomal subunit protein uS7c">
    <location>
        <begin position="1"/>
        <end position="155"/>
    </location>
</feature>
<dbReference type="EMBL" id="AY147486">
    <property type="protein sequence ID" value="AAN32063.1"/>
    <property type="molecule type" value="Genomic_DNA"/>
</dbReference>
<dbReference type="SMR" id="Q67IE0"/>
<dbReference type="GO" id="GO:0009507">
    <property type="term" value="C:chloroplast"/>
    <property type="evidence" value="ECO:0007669"/>
    <property type="project" value="UniProtKB-SubCell"/>
</dbReference>
<dbReference type="GO" id="GO:0015935">
    <property type="term" value="C:small ribosomal subunit"/>
    <property type="evidence" value="ECO:0007669"/>
    <property type="project" value="InterPro"/>
</dbReference>
<dbReference type="GO" id="GO:0019843">
    <property type="term" value="F:rRNA binding"/>
    <property type="evidence" value="ECO:0007669"/>
    <property type="project" value="UniProtKB-UniRule"/>
</dbReference>
<dbReference type="GO" id="GO:0003735">
    <property type="term" value="F:structural constituent of ribosome"/>
    <property type="evidence" value="ECO:0007669"/>
    <property type="project" value="InterPro"/>
</dbReference>
<dbReference type="GO" id="GO:0006412">
    <property type="term" value="P:translation"/>
    <property type="evidence" value="ECO:0007669"/>
    <property type="project" value="UniProtKB-UniRule"/>
</dbReference>
<dbReference type="CDD" id="cd14871">
    <property type="entry name" value="uS7_Chloroplast"/>
    <property type="match status" value="1"/>
</dbReference>
<dbReference type="FunFam" id="1.10.455.10:FF:000001">
    <property type="entry name" value="30S ribosomal protein S7"/>
    <property type="match status" value="1"/>
</dbReference>
<dbReference type="Gene3D" id="1.10.455.10">
    <property type="entry name" value="Ribosomal protein S7 domain"/>
    <property type="match status" value="1"/>
</dbReference>
<dbReference type="HAMAP" id="MF_00480_B">
    <property type="entry name" value="Ribosomal_uS7_B"/>
    <property type="match status" value="1"/>
</dbReference>
<dbReference type="InterPro" id="IPR000235">
    <property type="entry name" value="Ribosomal_uS7"/>
</dbReference>
<dbReference type="InterPro" id="IPR005717">
    <property type="entry name" value="Ribosomal_uS7_bac/org-type"/>
</dbReference>
<dbReference type="InterPro" id="IPR020606">
    <property type="entry name" value="Ribosomal_uS7_CS"/>
</dbReference>
<dbReference type="InterPro" id="IPR023798">
    <property type="entry name" value="Ribosomal_uS7_dom"/>
</dbReference>
<dbReference type="InterPro" id="IPR036823">
    <property type="entry name" value="Ribosomal_uS7_dom_sf"/>
</dbReference>
<dbReference type="NCBIfam" id="TIGR01029">
    <property type="entry name" value="rpsG_bact"/>
    <property type="match status" value="1"/>
</dbReference>
<dbReference type="PANTHER" id="PTHR11205">
    <property type="entry name" value="RIBOSOMAL PROTEIN S7"/>
    <property type="match status" value="1"/>
</dbReference>
<dbReference type="Pfam" id="PF00177">
    <property type="entry name" value="Ribosomal_S7"/>
    <property type="match status" value="1"/>
</dbReference>
<dbReference type="PIRSF" id="PIRSF002122">
    <property type="entry name" value="RPS7p_RPS7a_RPS5e_RPS7o"/>
    <property type="match status" value="1"/>
</dbReference>
<dbReference type="SUPFAM" id="SSF47973">
    <property type="entry name" value="Ribosomal protein S7"/>
    <property type="match status" value="1"/>
</dbReference>
<dbReference type="PROSITE" id="PS00052">
    <property type="entry name" value="RIBOSOMAL_S7"/>
    <property type="match status" value="1"/>
</dbReference>